<gene>
    <name evidence="1" type="primary">prfA</name>
    <name type="ordered locus">FTA_1824</name>
</gene>
<proteinExistence type="inferred from homology"/>
<organism>
    <name type="scientific">Francisella tularensis subsp. holarctica (strain FTNF002-00 / FTA)</name>
    <dbReference type="NCBI Taxonomy" id="458234"/>
    <lineage>
        <taxon>Bacteria</taxon>
        <taxon>Pseudomonadati</taxon>
        <taxon>Pseudomonadota</taxon>
        <taxon>Gammaproteobacteria</taxon>
        <taxon>Thiotrichales</taxon>
        <taxon>Francisellaceae</taxon>
        <taxon>Francisella</taxon>
    </lineage>
</organism>
<reference key="1">
    <citation type="journal article" date="2009" name="PLoS ONE">
        <title>Complete genome sequence of Francisella tularensis subspecies holarctica FTNF002-00.</title>
        <authorList>
            <person name="Barabote R.D."/>
            <person name="Xie G."/>
            <person name="Brettin T.S."/>
            <person name="Hinrichs S.H."/>
            <person name="Fey P.D."/>
            <person name="Jay J.J."/>
            <person name="Engle J.L."/>
            <person name="Godbole S.D."/>
            <person name="Noronha J.M."/>
            <person name="Scheuermann R.H."/>
            <person name="Zhou L.W."/>
            <person name="Lion C."/>
            <person name="Dempsey M.P."/>
        </authorList>
    </citation>
    <scope>NUCLEOTIDE SEQUENCE [LARGE SCALE GENOMIC DNA]</scope>
    <source>
        <strain>FTNF002-00 / FTA</strain>
    </source>
</reference>
<sequence>MKDSIKAKLQSLIERHEEVSALLSEAGIISDQNKFRDLSKEYSHLEPIVKAFKEYTQALEDKQAAYEMLNEKDAELVEMAKEELKLANEAIEKLESELQIFLLPRDPNDDANVFLEIRAGTGGDEASIFSGDLFKMYSKYAEQRGWKIEVISASEGEHGGYKEIISRIYGDGVYSQLKFESGAHRVQRVPATESQGRIHTSACTVAVMPEADEVEGIDINPADIKVDTFRASGAGGQHVNKTDSAIRITHIPTGVVVECQDQRSQHKNRAAAMSMLKSKLLQAEIDKQQKEQSDTRKSLVGSGDRSERIRTYNYPQGRVTDHRINLTLYKLDEVMEGSLDSIIQPLVLEHQADLLATMSDE</sequence>
<feature type="chain" id="PRO_1000004891" description="Peptide chain release factor 1">
    <location>
        <begin position="1"/>
        <end position="361"/>
    </location>
</feature>
<feature type="region of interest" description="Disordered" evidence="2">
    <location>
        <begin position="287"/>
        <end position="313"/>
    </location>
</feature>
<feature type="compositionally biased region" description="Basic and acidic residues" evidence="2">
    <location>
        <begin position="287"/>
        <end position="297"/>
    </location>
</feature>
<feature type="modified residue" description="N5-methylglutamine" evidence="1">
    <location>
        <position position="237"/>
    </location>
</feature>
<dbReference type="EMBL" id="CP000803">
    <property type="protein sequence ID" value="ABU62299.1"/>
    <property type="molecule type" value="Genomic_DNA"/>
</dbReference>
<dbReference type="RefSeq" id="WP_003017177.1">
    <property type="nucleotide sequence ID" value="NC_009749.1"/>
</dbReference>
<dbReference type="SMR" id="A7NE96"/>
<dbReference type="KEGG" id="fta:FTA_1824"/>
<dbReference type="HOGENOM" id="CLU_036856_0_1_6"/>
<dbReference type="GO" id="GO:0005737">
    <property type="term" value="C:cytoplasm"/>
    <property type="evidence" value="ECO:0007669"/>
    <property type="project" value="UniProtKB-SubCell"/>
</dbReference>
<dbReference type="GO" id="GO:0016149">
    <property type="term" value="F:translation release factor activity, codon specific"/>
    <property type="evidence" value="ECO:0007669"/>
    <property type="project" value="UniProtKB-UniRule"/>
</dbReference>
<dbReference type="FunFam" id="3.30.160.20:FF:000004">
    <property type="entry name" value="Peptide chain release factor 1"/>
    <property type="match status" value="1"/>
</dbReference>
<dbReference type="FunFam" id="3.30.70.1660:FF:000002">
    <property type="entry name" value="Peptide chain release factor 1"/>
    <property type="match status" value="1"/>
</dbReference>
<dbReference type="FunFam" id="3.30.70.1660:FF:000004">
    <property type="entry name" value="Peptide chain release factor 1"/>
    <property type="match status" value="1"/>
</dbReference>
<dbReference type="Gene3D" id="3.30.160.20">
    <property type="match status" value="1"/>
</dbReference>
<dbReference type="Gene3D" id="3.30.70.1660">
    <property type="match status" value="2"/>
</dbReference>
<dbReference type="Gene3D" id="6.10.140.1950">
    <property type="match status" value="1"/>
</dbReference>
<dbReference type="HAMAP" id="MF_00093">
    <property type="entry name" value="Rel_fac_1"/>
    <property type="match status" value="1"/>
</dbReference>
<dbReference type="InterPro" id="IPR005139">
    <property type="entry name" value="PCRF"/>
</dbReference>
<dbReference type="InterPro" id="IPR000352">
    <property type="entry name" value="Pep_chain_release_fac_I"/>
</dbReference>
<dbReference type="InterPro" id="IPR045853">
    <property type="entry name" value="Pep_chain_release_fac_I_sf"/>
</dbReference>
<dbReference type="InterPro" id="IPR050057">
    <property type="entry name" value="Prokaryotic/Mito_RF"/>
</dbReference>
<dbReference type="InterPro" id="IPR004373">
    <property type="entry name" value="RF-1"/>
</dbReference>
<dbReference type="NCBIfam" id="TIGR00019">
    <property type="entry name" value="prfA"/>
    <property type="match status" value="1"/>
</dbReference>
<dbReference type="NCBIfam" id="NF001859">
    <property type="entry name" value="PRK00591.1"/>
    <property type="match status" value="1"/>
</dbReference>
<dbReference type="PANTHER" id="PTHR43804">
    <property type="entry name" value="LD18447P"/>
    <property type="match status" value="1"/>
</dbReference>
<dbReference type="PANTHER" id="PTHR43804:SF7">
    <property type="entry name" value="LD18447P"/>
    <property type="match status" value="1"/>
</dbReference>
<dbReference type="Pfam" id="PF03462">
    <property type="entry name" value="PCRF"/>
    <property type="match status" value="1"/>
</dbReference>
<dbReference type="Pfam" id="PF00472">
    <property type="entry name" value="RF-1"/>
    <property type="match status" value="1"/>
</dbReference>
<dbReference type="SMART" id="SM00937">
    <property type="entry name" value="PCRF"/>
    <property type="match status" value="1"/>
</dbReference>
<dbReference type="SUPFAM" id="SSF75620">
    <property type="entry name" value="Release factor"/>
    <property type="match status" value="1"/>
</dbReference>
<dbReference type="PROSITE" id="PS00745">
    <property type="entry name" value="RF_PROK_I"/>
    <property type="match status" value="1"/>
</dbReference>
<evidence type="ECO:0000255" key="1">
    <source>
        <dbReference type="HAMAP-Rule" id="MF_00093"/>
    </source>
</evidence>
<evidence type="ECO:0000256" key="2">
    <source>
        <dbReference type="SAM" id="MobiDB-lite"/>
    </source>
</evidence>
<accession>A7NE96</accession>
<name>RF1_FRATF</name>
<keyword id="KW-0963">Cytoplasm</keyword>
<keyword id="KW-0488">Methylation</keyword>
<keyword id="KW-0648">Protein biosynthesis</keyword>
<comment type="function">
    <text evidence="1">Peptide chain release factor 1 directs the termination of translation in response to the peptide chain termination codons UAG and UAA.</text>
</comment>
<comment type="subcellular location">
    <subcellularLocation>
        <location evidence="1">Cytoplasm</location>
    </subcellularLocation>
</comment>
<comment type="PTM">
    <text evidence="1">Methylated by PrmC. Methylation increases the termination efficiency of RF1.</text>
</comment>
<comment type="similarity">
    <text evidence="1">Belongs to the prokaryotic/mitochondrial release factor family.</text>
</comment>
<protein>
    <recommendedName>
        <fullName evidence="1">Peptide chain release factor 1</fullName>
        <shortName evidence="1">RF-1</shortName>
    </recommendedName>
</protein>